<sequence>MDLAGLLLDEEGTFSLSGFQDFTFLPGHQKLSARIRRRLYYGWDLETDCSLEELSSPVADITVELLQKAAPSPIRRLQKKYVAHVSREACISPCAMMLALVYIERLRHRNPDYLQHVSSSDLFLISMMVASKYLYDEGEEEEVFNDEWGAAGGVAVPTLNALERSFLSAMDWRLYTDPREIFEVLSWLESCVAEQQGRRRGWYTYTDLCVLLEQPMWQLSLGSLCQRLVKLSCLLAVAYVSSVALAVASMAVIHQSLGLSSSPSPSPPELTLVPKNLLQPCIPAPVPQCLTNVSSCLEDSVELPSLWGSLLDPLTPPLMPPPDPPAPPTPFHKCPFCQKFQRNPPNCRACHQPNRTVSIGPIHPFYHTHGLAPPWLWSPVAPPFLQPQQCSLFSVMKLARLTSVIFPG</sequence>
<proteinExistence type="evidence at transcript level"/>
<feature type="chain" id="PRO_0000089355" description="Protein CNPPD1">
    <location>
        <begin position="1"/>
        <end position="408"/>
    </location>
</feature>
<feature type="transmembrane region" description="Helical" evidence="1">
    <location>
        <begin position="233"/>
        <end position="253"/>
    </location>
</feature>
<protein>
    <recommendedName>
        <fullName>Protein CNPPD1</fullName>
    </recommendedName>
</protein>
<keyword id="KW-0472">Membrane</keyword>
<keyword id="KW-1185">Reference proteome</keyword>
<keyword id="KW-0812">Transmembrane</keyword>
<keyword id="KW-1133">Transmembrane helix</keyword>
<dbReference type="EMBL" id="BC061750">
    <property type="protein sequence ID" value="AAH61750.1"/>
    <property type="molecule type" value="mRNA"/>
</dbReference>
<dbReference type="RefSeq" id="NP_954543.1">
    <property type="nucleotide sequence ID" value="NM_199112.1"/>
</dbReference>
<dbReference type="RefSeq" id="XP_006245288.1">
    <property type="nucleotide sequence ID" value="XM_006245226.5"/>
</dbReference>
<dbReference type="SMR" id="Q6P7B2"/>
<dbReference type="FunCoup" id="Q6P7B2">
    <property type="interactions" value="2473"/>
</dbReference>
<dbReference type="STRING" id="10116.ENSRNOP00000024975"/>
<dbReference type="PhosphoSitePlus" id="Q6P7B2"/>
<dbReference type="PaxDb" id="10116-ENSRNOP00000024975"/>
<dbReference type="Ensembl" id="ENSRNOT00000024975.5">
    <property type="protein sequence ID" value="ENSRNOP00000024975.3"/>
    <property type="gene ID" value="ENSRNOG00000018325.5"/>
</dbReference>
<dbReference type="GeneID" id="316530"/>
<dbReference type="KEGG" id="rno:316530"/>
<dbReference type="UCSC" id="RGD:735175">
    <property type="organism name" value="rat"/>
</dbReference>
<dbReference type="AGR" id="RGD:735175"/>
<dbReference type="CTD" id="27013"/>
<dbReference type="RGD" id="735175">
    <property type="gene designation" value="Cnppd1"/>
</dbReference>
<dbReference type="eggNOG" id="KOG1674">
    <property type="taxonomic scope" value="Eukaryota"/>
</dbReference>
<dbReference type="GeneTree" id="ENSGT00390000000862"/>
<dbReference type="HOGENOM" id="CLU_051510_0_0_1"/>
<dbReference type="InParanoid" id="Q6P7B2"/>
<dbReference type="OrthoDB" id="244495at2759"/>
<dbReference type="PhylomeDB" id="Q6P7B2"/>
<dbReference type="TreeFam" id="TF105853"/>
<dbReference type="PRO" id="PR:Q6P7B2"/>
<dbReference type="Proteomes" id="UP000002494">
    <property type="component" value="Chromosome 9"/>
</dbReference>
<dbReference type="Bgee" id="ENSRNOG00000018325">
    <property type="expression patterns" value="Expressed in thymus and 20 other cell types or tissues"/>
</dbReference>
<dbReference type="GO" id="GO:0000307">
    <property type="term" value="C:cyclin-dependent protein kinase holoenzyme complex"/>
    <property type="evidence" value="ECO:0000318"/>
    <property type="project" value="GO_Central"/>
</dbReference>
<dbReference type="GO" id="GO:0016020">
    <property type="term" value="C:membrane"/>
    <property type="evidence" value="ECO:0007669"/>
    <property type="project" value="UniProtKB-SubCell"/>
</dbReference>
<dbReference type="GO" id="GO:0005634">
    <property type="term" value="C:nucleus"/>
    <property type="evidence" value="ECO:0000318"/>
    <property type="project" value="GO_Central"/>
</dbReference>
<dbReference type="GO" id="GO:0016538">
    <property type="term" value="F:cyclin-dependent protein serine/threonine kinase regulator activity"/>
    <property type="evidence" value="ECO:0000318"/>
    <property type="project" value="GO_Central"/>
</dbReference>
<dbReference type="GO" id="GO:0019901">
    <property type="term" value="F:protein kinase binding"/>
    <property type="evidence" value="ECO:0007669"/>
    <property type="project" value="InterPro"/>
</dbReference>
<dbReference type="CDD" id="cd20557">
    <property type="entry name" value="CYCLIN_ScPCL1-like"/>
    <property type="match status" value="1"/>
</dbReference>
<dbReference type="Gene3D" id="1.10.472.10">
    <property type="entry name" value="Cyclin-like"/>
    <property type="match status" value="1"/>
</dbReference>
<dbReference type="InterPro" id="IPR013922">
    <property type="entry name" value="Cyclin_PHO80-like"/>
</dbReference>
<dbReference type="PANTHER" id="PTHR15615">
    <property type="match status" value="1"/>
</dbReference>
<dbReference type="PANTHER" id="PTHR15615:SF108">
    <property type="entry name" value="PROTEIN CNPPD1"/>
    <property type="match status" value="1"/>
</dbReference>
<dbReference type="Pfam" id="PF08613">
    <property type="entry name" value="Cyclin"/>
    <property type="match status" value="1"/>
</dbReference>
<organism>
    <name type="scientific">Rattus norvegicus</name>
    <name type="common">Rat</name>
    <dbReference type="NCBI Taxonomy" id="10116"/>
    <lineage>
        <taxon>Eukaryota</taxon>
        <taxon>Metazoa</taxon>
        <taxon>Chordata</taxon>
        <taxon>Craniata</taxon>
        <taxon>Vertebrata</taxon>
        <taxon>Euteleostomi</taxon>
        <taxon>Mammalia</taxon>
        <taxon>Eutheria</taxon>
        <taxon>Euarchontoglires</taxon>
        <taxon>Glires</taxon>
        <taxon>Rodentia</taxon>
        <taxon>Myomorpha</taxon>
        <taxon>Muroidea</taxon>
        <taxon>Muridae</taxon>
        <taxon>Murinae</taxon>
        <taxon>Rattus</taxon>
    </lineage>
</organism>
<comment type="subcellular location">
    <subcellularLocation>
        <location evidence="2">Membrane</location>
        <topology evidence="2">Single-pass membrane protein</topology>
    </subcellularLocation>
</comment>
<comment type="similarity">
    <text evidence="2">Belongs to the CNPPD1 family.</text>
</comment>
<reference key="1">
    <citation type="journal article" date="2004" name="Genome Res.">
        <title>The status, quality, and expansion of the NIH full-length cDNA project: the Mammalian Gene Collection (MGC).</title>
        <authorList>
            <consortium name="The MGC Project Team"/>
        </authorList>
    </citation>
    <scope>NUCLEOTIDE SEQUENCE [LARGE SCALE MRNA]</scope>
    <source>
        <tissue>Prostate</tissue>
    </source>
</reference>
<name>CNPD1_RAT</name>
<accession>Q6P7B2</accession>
<evidence type="ECO:0000255" key="1"/>
<evidence type="ECO:0000305" key="2"/>
<gene>
    <name type="primary">Cnppd1</name>
</gene>